<comment type="function">
    <text evidence="1">The UvrABC repair system catalyzes the recognition and processing of DNA lesions. UvrC both incises the 5' and 3' sides of the lesion. The N-terminal half is responsible for the 3' incision and the C-terminal half is responsible for the 5' incision.</text>
</comment>
<comment type="subunit">
    <text evidence="1">Interacts with UvrB in an incision complex.</text>
</comment>
<comment type="subcellular location">
    <subcellularLocation>
        <location evidence="1">Cytoplasm</location>
    </subcellularLocation>
</comment>
<comment type="similarity">
    <text evidence="1">Belongs to the UvrC family.</text>
</comment>
<accession>Q1IZB2</accession>
<name>UVRC_DEIGD</name>
<organism>
    <name type="scientific">Deinococcus geothermalis (strain DSM 11300 / CIP 105573 / AG-3a)</name>
    <dbReference type="NCBI Taxonomy" id="319795"/>
    <lineage>
        <taxon>Bacteria</taxon>
        <taxon>Thermotogati</taxon>
        <taxon>Deinococcota</taxon>
        <taxon>Deinococci</taxon>
        <taxon>Deinococcales</taxon>
        <taxon>Deinococcaceae</taxon>
        <taxon>Deinococcus</taxon>
    </lineage>
</organism>
<feature type="chain" id="PRO_0000264888" description="UvrABC system protein C">
    <location>
        <begin position="1"/>
        <end position="616"/>
    </location>
</feature>
<feature type="domain" description="GIY-YIG" evidence="1">
    <location>
        <begin position="11"/>
        <end position="85"/>
    </location>
</feature>
<feature type="domain" description="UVR" evidence="1">
    <location>
        <begin position="194"/>
        <end position="229"/>
    </location>
</feature>
<sequence length="616" mass="68288">MHFDDLPVLPASPGVYIFRRGGTPIYIGKAVNLRSRVAQHFKAGGKSGKFTALADSLDFITTRNEVEALILEANLIKQHRPHYNVLLKDDKHYPFLKLTNEAFPMLVVTRRVLKDGASYYGPYPDASAVRRVKHLIDTMFPLRKNSGLPMQKKPRPCLNYHMGRCLGPCVDAADPQAYAQVVEDVKALLEGRAAPVIARLKADMQAAARAQDFEQAARLRDRVQAVEKLFGTEQHAYVSEETDLDFLGVAQAGEYAMVQLFRLRGGRVVGRDKRFLVGAEGGADVGEVLGAFVQDYYTQATHVPPLILLPAEFEDAPVWSAFLSERAGRRVEMRTPKRGDKAELVEMAQRNAAAGLESELALLERRGDHPGLDALREVLALPDRPWRIEGYDNSNLFGSNIVSGMVVFEGGRARRSEHRRFKVRGLDHPDDYAAMHQTITRRLTGSLADKLPLPDLILIDGGRGQVHAALDALRAADVRVPLVGLAKREERIILPGRFGAQWWLETGTEVGVGGELLLPHTHPALRVLIGVRDEVHHYAVSYHRTLRGEQMLRSVFDDLPGIGQKRRDALLEHFTSLEDLAAAPVERIAAVPGMNLRAAQSVKKFLAERTANGTPT</sequence>
<keyword id="KW-0963">Cytoplasm</keyword>
<keyword id="KW-0227">DNA damage</keyword>
<keyword id="KW-0228">DNA excision</keyword>
<keyword id="KW-0234">DNA repair</keyword>
<keyword id="KW-0267">Excision nuclease</keyword>
<keyword id="KW-0742">SOS response</keyword>
<reference key="1">
    <citation type="submission" date="2006-04" db="EMBL/GenBank/DDBJ databases">
        <title>Complete sequence of chromosome of Deinococcus geothermalis DSM 11300.</title>
        <authorList>
            <person name="Copeland A."/>
            <person name="Lucas S."/>
            <person name="Lapidus A."/>
            <person name="Barry K."/>
            <person name="Detter J.C."/>
            <person name="Glavina del Rio T."/>
            <person name="Hammon N."/>
            <person name="Israni S."/>
            <person name="Dalin E."/>
            <person name="Tice H."/>
            <person name="Pitluck S."/>
            <person name="Brettin T."/>
            <person name="Bruce D."/>
            <person name="Han C."/>
            <person name="Tapia R."/>
            <person name="Saunders E."/>
            <person name="Gilna P."/>
            <person name="Schmutz J."/>
            <person name="Larimer F."/>
            <person name="Land M."/>
            <person name="Hauser L."/>
            <person name="Kyrpides N."/>
            <person name="Kim E."/>
            <person name="Daly M.J."/>
            <person name="Fredrickson J.K."/>
            <person name="Makarova K.S."/>
            <person name="Gaidamakova E.K."/>
            <person name="Zhai M."/>
            <person name="Richardson P."/>
        </authorList>
    </citation>
    <scope>NUCLEOTIDE SEQUENCE [LARGE SCALE GENOMIC DNA]</scope>
    <source>
        <strain>DSM 11300 / CIP 105573 / AG-3a</strain>
    </source>
</reference>
<proteinExistence type="inferred from homology"/>
<gene>
    <name evidence="1" type="primary">uvrC</name>
    <name type="ordered locus">Dgeo_1124</name>
</gene>
<dbReference type="EMBL" id="CP000359">
    <property type="protein sequence ID" value="ABF45422.1"/>
    <property type="molecule type" value="Genomic_DNA"/>
</dbReference>
<dbReference type="RefSeq" id="WP_011530259.1">
    <property type="nucleotide sequence ID" value="NC_008025.1"/>
</dbReference>
<dbReference type="SMR" id="Q1IZB2"/>
<dbReference type="STRING" id="319795.Dgeo_1124"/>
<dbReference type="KEGG" id="dge:Dgeo_1124"/>
<dbReference type="eggNOG" id="COG0322">
    <property type="taxonomic scope" value="Bacteria"/>
</dbReference>
<dbReference type="HOGENOM" id="CLU_014841_3_2_0"/>
<dbReference type="Proteomes" id="UP000002431">
    <property type="component" value="Chromosome"/>
</dbReference>
<dbReference type="GO" id="GO:0005737">
    <property type="term" value="C:cytoplasm"/>
    <property type="evidence" value="ECO:0007669"/>
    <property type="project" value="UniProtKB-SubCell"/>
</dbReference>
<dbReference type="GO" id="GO:0009380">
    <property type="term" value="C:excinuclease repair complex"/>
    <property type="evidence" value="ECO:0007669"/>
    <property type="project" value="InterPro"/>
</dbReference>
<dbReference type="GO" id="GO:0003677">
    <property type="term" value="F:DNA binding"/>
    <property type="evidence" value="ECO:0007669"/>
    <property type="project" value="UniProtKB-UniRule"/>
</dbReference>
<dbReference type="GO" id="GO:0009381">
    <property type="term" value="F:excinuclease ABC activity"/>
    <property type="evidence" value="ECO:0007669"/>
    <property type="project" value="UniProtKB-UniRule"/>
</dbReference>
<dbReference type="GO" id="GO:0006289">
    <property type="term" value="P:nucleotide-excision repair"/>
    <property type="evidence" value="ECO:0007669"/>
    <property type="project" value="UniProtKB-UniRule"/>
</dbReference>
<dbReference type="GO" id="GO:0009432">
    <property type="term" value="P:SOS response"/>
    <property type="evidence" value="ECO:0007669"/>
    <property type="project" value="UniProtKB-UniRule"/>
</dbReference>
<dbReference type="CDD" id="cd10434">
    <property type="entry name" value="GIY-YIG_UvrC_Cho"/>
    <property type="match status" value="1"/>
</dbReference>
<dbReference type="FunFam" id="4.10.860.10:FF:000022">
    <property type="match status" value="1"/>
</dbReference>
<dbReference type="FunFam" id="3.30.420.340:FF:000004">
    <property type="entry name" value="UvrABC system protein C"/>
    <property type="match status" value="1"/>
</dbReference>
<dbReference type="FunFam" id="3.40.1440.10:FF:000001">
    <property type="entry name" value="UvrABC system protein C"/>
    <property type="match status" value="1"/>
</dbReference>
<dbReference type="Gene3D" id="1.10.150.20">
    <property type="entry name" value="5' to 3' exonuclease, C-terminal subdomain"/>
    <property type="match status" value="1"/>
</dbReference>
<dbReference type="Gene3D" id="3.40.1440.10">
    <property type="entry name" value="GIY-YIG endonuclease"/>
    <property type="match status" value="1"/>
</dbReference>
<dbReference type="Gene3D" id="4.10.860.10">
    <property type="entry name" value="UVR domain"/>
    <property type="match status" value="1"/>
</dbReference>
<dbReference type="Gene3D" id="3.30.420.340">
    <property type="entry name" value="UvrC, RNAse H endonuclease domain"/>
    <property type="match status" value="1"/>
</dbReference>
<dbReference type="HAMAP" id="MF_00203">
    <property type="entry name" value="UvrC"/>
    <property type="match status" value="1"/>
</dbReference>
<dbReference type="InterPro" id="IPR000305">
    <property type="entry name" value="GIY-YIG_endonuc"/>
</dbReference>
<dbReference type="InterPro" id="IPR035901">
    <property type="entry name" value="GIY-YIG_endonuc_sf"/>
</dbReference>
<dbReference type="InterPro" id="IPR047296">
    <property type="entry name" value="GIY-YIG_UvrC_Cho"/>
</dbReference>
<dbReference type="InterPro" id="IPR010994">
    <property type="entry name" value="RuvA_2-like"/>
</dbReference>
<dbReference type="InterPro" id="IPR001943">
    <property type="entry name" value="UVR_dom"/>
</dbReference>
<dbReference type="InterPro" id="IPR036876">
    <property type="entry name" value="UVR_dom_sf"/>
</dbReference>
<dbReference type="InterPro" id="IPR050066">
    <property type="entry name" value="UvrABC_protein_C"/>
</dbReference>
<dbReference type="InterPro" id="IPR004791">
    <property type="entry name" value="UvrC"/>
</dbReference>
<dbReference type="InterPro" id="IPR001162">
    <property type="entry name" value="UvrC_RNase_H_dom"/>
</dbReference>
<dbReference type="InterPro" id="IPR038476">
    <property type="entry name" value="UvrC_RNase_H_dom_sf"/>
</dbReference>
<dbReference type="NCBIfam" id="TIGR00194">
    <property type="entry name" value="uvrC"/>
    <property type="match status" value="1"/>
</dbReference>
<dbReference type="PANTHER" id="PTHR30562:SF1">
    <property type="entry name" value="UVRABC SYSTEM PROTEIN C"/>
    <property type="match status" value="1"/>
</dbReference>
<dbReference type="PANTHER" id="PTHR30562">
    <property type="entry name" value="UVRC/OXIDOREDUCTASE"/>
    <property type="match status" value="1"/>
</dbReference>
<dbReference type="Pfam" id="PF01541">
    <property type="entry name" value="GIY-YIG"/>
    <property type="match status" value="1"/>
</dbReference>
<dbReference type="Pfam" id="PF14520">
    <property type="entry name" value="HHH_5"/>
    <property type="match status" value="1"/>
</dbReference>
<dbReference type="Pfam" id="PF02151">
    <property type="entry name" value="UVR"/>
    <property type="match status" value="1"/>
</dbReference>
<dbReference type="Pfam" id="PF22920">
    <property type="entry name" value="UvrC_RNaseH"/>
    <property type="match status" value="1"/>
</dbReference>
<dbReference type="Pfam" id="PF08459">
    <property type="entry name" value="UvrC_RNaseH_dom"/>
    <property type="match status" value="1"/>
</dbReference>
<dbReference type="SMART" id="SM00465">
    <property type="entry name" value="GIYc"/>
    <property type="match status" value="1"/>
</dbReference>
<dbReference type="SUPFAM" id="SSF46600">
    <property type="entry name" value="C-terminal UvrC-binding domain of UvrB"/>
    <property type="match status" value="1"/>
</dbReference>
<dbReference type="SUPFAM" id="SSF82771">
    <property type="entry name" value="GIY-YIG endonuclease"/>
    <property type="match status" value="1"/>
</dbReference>
<dbReference type="SUPFAM" id="SSF47781">
    <property type="entry name" value="RuvA domain 2-like"/>
    <property type="match status" value="1"/>
</dbReference>
<dbReference type="PROSITE" id="PS50164">
    <property type="entry name" value="GIY_YIG"/>
    <property type="match status" value="1"/>
</dbReference>
<dbReference type="PROSITE" id="PS50151">
    <property type="entry name" value="UVR"/>
    <property type="match status" value="1"/>
</dbReference>
<dbReference type="PROSITE" id="PS50165">
    <property type="entry name" value="UVRC"/>
    <property type="match status" value="1"/>
</dbReference>
<evidence type="ECO:0000255" key="1">
    <source>
        <dbReference type="HAMAP-Rule" id="MF_00203"/>
    </source>
</evidence>
<protein>
    <recommendedName>
        <fullName evidence="1">UvrABC system protein C</fullName>
        <shortName evidence="1">Protein UvrC</shortName>
    </recommendedName>
    <alternativeName>
        <fullName evidence="1">Excinuclease ABC subunit C</fullName>
    </alternativeName>
</protein>